<keyword id="KW-0067">ATP-binding</keyword>
<keyword id="KW-0479">Metal-binding</keyword>
<keyword id="KW-0547">Nucleotide-binding</keyword>
<keyword id="KW-0539">Nucleus</keyword>
<keyword id="KW-1185">Reference proteome</keyword>
<keyword id="KW-0808">Transferase</keyword>
<keyword id="KW-0833">Ubl conjugation pathway</keyword>
<keyword id="KW-0862">Zinc</keyword>
<organism>
    <name type="scientific">Xenopus laevis</name>
    <name type="common">African clawed frog</name>
    <dbReference type="NCBI Taxonomy" id="8355"/>
    <lineage>
        <taxon>Eukaryota</taxon>
        <taxon>Metazoa</taxon>
        <taxon>Chordata</taxon>
        <taxon>Craniata</taxon>
        <taxon>Vertebrata</taxon>
        <taxon>Euteleostomi</taxon>
        <taxon>Amphibia</taxon>
        <taxon>Batrachia</taxon>
        <taxon>Anura</taxon>
        <taxon>Pipoidea</taxon>
        <taxon>Pipidae</taxon>
        <taxon>Xenopodinae</taxon>
        <taxon>Xenopus</taxon>
        <taxon>Xenopus</taxon>
    </lineage>
</organism>
<comment type="function">
    <text evidence="2">The heterodimer acts as an E1 ligase for sumo1, sumo2, and sumo3. It mediates ATP-dependent activation of sumo proteins followed by formation of a thioester bond between a sumo protein and a conserved active site cysteine residue on uba2/sae2 (By similarity).</text>
</comment>
<comment type="pathway">
    <text>Protein modification; protein sumoylation.</text>
</comment>
<comment type="subunit">
    <text evidence="1">Heterodimer of sae1 and uba2/sae2. The heterodimer corresponds to the two domains that are encoded on a single polypeptide chain in ubiquitin-activating enzyme E1. Interacts with ube2i (By similarity).</text>
</comment>
<comment type="subcellular location">
    <subcellularLocation>
        <location evidence="1">Nucleus</location>
    </subcellularLocation>
</comment>
<comment type="similarity">
    <text evidence="5">Belongs to the ubiquitin-activating E1 family.</text>
</comment>
<evidence type="ECO:0000250" key="1"/>
<evidence type="ECO:0000250" key="2">
    <source>
        <dbReference type="UniProtKB" id="Q9UBT2"/>
    </source>
</evidence>
<evidence type="ECO:0000255" key="3">
    <source>
        <dbReference type="PROSITE-ProRule" id="PRU10132"/>
    </source>
</evidence>
<evidence type="ECO:0000256" key="4">
    <source>
        <dbReference type="SAM" id="MobiDB-lite"/>
    </source>
</evidence>
<evidence type="ECO:0000305" key="5"/>
<dbReference type="EC" id="2.3.2.-"/>
<dbReference type="EMBL" id="BC081199">
    <property type="protein sequence ID" value="AAH81199.1"/>
    <property type="molecule type" value="mRNA"/>
</dbReference>
<dbReference type="RefSeq" id="NP_001083988.1">
    <property type="nucleotide sequence ID" value="NM_001090519.1"/>
</dbReference>
<dbReference type="SMR" id="Q642Q1"/>
<dbReference type="DNASU" id="399235"/>
<dbReference type="GeneID" id="399235"/>
<dbReference type="KEGG" id="xla:399235"/>
<dbReference type="AGR" id="Xenbase:XB-GENE-977715"/>
<dbReference type="CTD" id="399235"/>
<dbReference type="Xenbase" id="XB-GENE-977715">
    <property type="gene designation" value="uba2.L"/>
</dbReference>
<dbReference type="OMA" id="TPSEHIH"/>
<dbReference type="OrthoDB" id="10255449at2759"/>
<dbReference type="UniPathway" id="UPA00886"/>
<dbReference type="Proteomes" id="UP000186698">
    <property type="component" value="Chromosome 4L"/>
</dbReference>
<dbReference type="Bgee" id="399235">
    <property type="expression patterns" value="Expressed in neurula embryo and 19 other cell types or tissues"/>
</dbReference>
<dbReference type="GO" id="GO:0005737">
    <property type="term" value="C:cytoplasm"/>
    <property type="evidence" value="ECO:0000318"/>
    <property type="project" value="GO_Central"/>
</dbReference>
<dbReference type="GO" id="GO:0031510">
    <property type="term" value="C:SUMO activating enzyme complex"/>
    <property type="evidence" value="ECO:0000250"/>
    <property type="project" value="UniProtKB"/>
</dbReference>
<dbReference type="GO" id="GO:0005524">
    <property type="term" value="F:ATP binding"/>
    <property type="evidence" value="ECO:0007669"/>
    <property type="project" value="UniProtKB-KW"/>
</dbReference>
<dbReference type="GO" id="GO:0046872">
    <property type="term" value="F:metal ion binding"/>
    <property type="evidence" value="ECO:0007669"/>
    <property type="project" value="UniProtKB-KW"/>
</dbReference>
<dbReference type="GO" id="GO:0019948">
    <property type="term" value="F:SUMO activating enzyme activity"/>
    <property type="evidence" value="ECO:0000250"/>
    <property type="project" value="UniProtKB"/>
</dbReference>
<dbReference type="GO" id="GO:0016740">
    <property type="term" value="F:transferase activity"/>
    <property type="evidence" value="ECO:0007669"/>
    <property type="project" value="UniProtKB-KW"/>
</dbReference>
<dbReference type="GO" id="GO:0016925">
    <property type="term" value="P:protein sumoylation"/>
    <property type="evidence" value="ECO:0000250"/>
    <property type="project" value="UniProtKB"/>
</dbReference>
<dbReference type="CDD" id="cd01489">
    <property type="entry name" value="Uba2_SUMO"/>
    <property type="match status" value="1"/>
</dbReference>
<dbReference type="FunFam" id="1.10.10.520:FF:000002">
    <property type="entry name" value="SUMO-activating enzyme subunit 2"/>
    <property type="match status" value="1"/>
</dbReference>
<dbReference type="FunFam" id="3.10.290.20:FF:000002">
    <property type="entry name" value="SUMO-activating enzyme subunit 2"/>
    <property type="match status" value="1"/>
</dbReference>
<dbReference type="FunFam" id="3.40.50.720:FF:000618">
    <property type="entry name" value="SUMO-activating enzyme subunit 2"/>
    <property type="match status" value="1"/>
</dbReference>
<dbReference type="FunFam" id="3.50.50.80:FF:000002">
    <property type="entry name" value="SUMO-activating enzyme subunit 2"/>
    <property type="match status" value="1"/>
</dbReference>
<dbReference type="Gene3D" id="1.10.10.520">
    <property type="entry name" value="Ubiquitin activating enzymes (Uba3). Chain: B, domain 2"/>
    <property type="match status" value="1"/>
</dbReference>
<dbReference type="Gene3D" id="3.50.50.80">
    <property type="entry name" value="Ubiquitin-activating enzyme E1, inactive adenylation domain, subdomain 1"/>
    <property type="match status" value="1"/>
</dbReference>
<dbReference type="Gene3D" id="3.10.290.20">
    <property type="entry name" value="Ubiquitin-like 2 activating enzyme e1b. Chain: B, domain 3"/>
    <property type="match status" value="1"/>
</dbReference>
<dbReference type="InterPro" id="IPR045886">
    <property type="entry name" value="ThiF/MoeB/HesA"/>
</dbReference>
<dbReference type="InterPro" id="IPR000594">
    <property type="entry name" value="ThiF_NAD_FAD-bd"/>
</dbReference>
<dbReference type="InterPro" id="IPR028077">
    <property type="entry name" value="UAE_UbL_dom"/>
</dbReference>
<dbReference type="InterPro" id="IPR042449">
    <property type="entry name" value="Ub-E1_IAD_1"/>
</dbReference>
<dbReference type="InterPro" id="IPR023318">
    <property type="entry name" value="Ub_act_enz_dom_a_sf"/>
</dbReference>
<dbReference type="InterPro" id="IPR030661">
    <property type="entry name" value="Uba2"/>
</dbReference>
<dbReference type="InterPro" id="IPR032426">
    <property type="entry name" value="UBA2_C"/>
</dbReference>
<dbReference type="InterPro" id="IPR035985">
    <property type="entry name" value="Ubiquitin-activating_enz"/>
</dbReference>
<dbReference type="InterPro" id="IPR033127">
    <property type="entry name" value="UBQ-activ_enz_E1_Cys_AS"/>
</dbReference>
<dbReference type="PANTHER" id="PTHR10953:SF5">
    <property type="entry name" value="SUMO-ACTIVATING ENZYME SUBUNIT 2"/>
    <property type="match status" value="1"/>
</dbReference>
<dbReference type="PANTHER" id="PTHR10953">
    <property type="entry name" value="UBIQUITIN-ACTIVATING ENZYME E1"/>
    <property type="match status" value="1"/>
</dbReference>
<dbReference type="Pfam" id="PF00899">
    <property type="entry name" value="ThiF"/>
    <property type="match status" value="1"/>
</dbReference>
<dbReference type="Pfam" id="PF14732">
    <property type="entry name" value="UAE_UbL"/>
    <property type="match status" value="1"/>
</dbReference>
<dbReference type="Pfam" id="PF16195">
    <property type="entry name" value="UBA2_C"/>
    <property type="match status" value="1"/>
</dbReference>
<dbReference type="PIRSF" id="PIRSF039133">
    <property type="entry name" value="SUMO_E1B"/>
    <property type="match status" value="1"/>
</dbReference>
<dbReference type="SUPFAM" id="SSF69572">
    <property type="entry name" value="Activating enzymes of the ubiquitin-like proteins"/>
    <property type="match status" value="1"/>
</dbReference>
<dbReference type="PROSITE" id="PS00865">
    <property type="entry name" value="UBIQUITIN_ACTIVAT_2"/>
    <property type="match status" value="1"/>
</dbReference>
<name>SAE2A_XENLA</name>
<sequence>MAVIGALPKEVAEAVSASRLLVVGAGGIGCELLKNLVLTGFTNLDVIDLDTIDVSNLNRQFLFQKKHVGRSKAQVAKESVLQFCPDANITAYHDSIMNPDYNVEFFKQFTMAMNALDNNAARNHVNRMCLAAGIPLIESGTAGYLGQVSVIKKGVTECYECQPKPTQKTFPGCTIRNTPSEPIHCIVWAKYLFNQLFGEEDADQEVAPDIADPEAAWDPTKAAERANASNVDGDIKRVSTKQWAKSTGYDPIKLFNKLFRDDIKYLLTMDRLWRKRKPPIPLEWASLHNKENCSEIQNESSLLGLKDQKVLNVASYAQLFSKSVETLREQLREKGDGAELVWDKDDVPAMDFVTAAANLRMHIFSMNMKSKFDVKSMAGNIIPAIATTNAVISGLIVLEGLKILSGNTEQCRTVFLNKQPNPRKKLLVPCSLDPPNPSCYVCAIKPEVTVKLNVHKVTVQMLQDKILKEKFAMVAPDVQIEDGKGTILISSEAGETDANNHRKISEFGIRNSSQLQADDFLQDYTLMMNILHSDEMEKDVDFEVVGDVPEKGPQKPPEESVKNITNGSDDGAQPSTSKAQDQDDVLIVDSDEESPSSSNADVGMESASLKRKLPDEEAVSSTKRKRIEPPVEEDDDIIALD</sequence>
<protein>
    <recommendedName>
        <fullName>SUMO-activating enzyme subunit 2-A</fullName>
        <ecNumber>2.3.2.-</ecNumber>
    </recommendedName>
    <alternativeName>
        <fullName>Ubiquitin-like 1-activating enzyme E1B-A</fullName>
    </alternativeName>
    <alternativeName>
        <fullName>Ubiquitin-like modifier-activating enzyme 2-A</fullName>
    </alternativeName>
</protein>
<reference key="1">
    <citation type="submission" date="2004-08" db="EMBL/GenBank/DDBJ databases">
        <authorList>
            <consortium name="NIH - Xenopus Gene Collection (XGC) project"/>
        </authorList>
    </citation>
    <scope>NUCLEOTIDE SEQUENCE [LARGE SCALE MRNA]</scope>
    <source>
        <tissue>Oocyte</tissue>
    </source>
</reference>
<proteinExistence type="evidence at transcript level"/>
<gene>
    <name type="primary">uba2-a</name>
    <name type="synonym">sae2-a</name>
    <name type="synonym">uble1b-a</name>
</gene>
<feature type="chain" id="PRO_0000268873" description="SUMO-activating enzyme subunit 2-A">
    <location>
        <begin position="1"/>
        <end position="641"/>
    </location>
</feature>
<feature type="region of interest" description="Disordered" evidence="4">
    <location>
        <begin position="546"/>
        <end position="641"/>
    </location>
</feature>
<feature type="compositionally biased region" description="Basic and acidic residues" evidence="4">
    <location>
        <begin position="548"/>
        <end position="561"/>
    </location>
</feature>
<feature type="compositionally biased region" description="Polar residues" evidence="4">
    <location>
        <begin position="562"/>
        <end position="579"/>
    </location>
</feature>
<feature type="compositionally biased region" description="Acidic residues" evidence="4">
    <location>
        <begin position="582"/>
        <end position="594"/>
    </location>
</feature>
<feature type="compositionally biased region" description="Acidic residues" evidence="4">
    <location>
        <begin position="630"/>
        <end position="641"/>
    </location>
</feature>
<feature type="active site" description="Glycyl thioester intermediate" evidence="3">
    <location>
        <position position="173"/>
    </location>
</feature>
<feature type="binding site" evidence="1">
    <location>
        <begin position="24"/>
        <end position="29"/>
    </location>
    <ligand>
        <name>ATP</name>
        <dbReference type="ChEBI" id="CHEBI:30616"/>
    </ligand>
</feature>
<feature type="binding site" evidence="1">
    <location>
        <position position="48"/>
    </location>
    <ligand>
        <name>ATP</name>
        <dbReference type="ChEBI" id="CHEBI:30616"/>
    </ligand>
</feature>
<feature type="binding site" evidence="1">
    <location>
        <begin position="56"/>
        <end position="59"/>
    </location>
    <ligand>
        <name>ATP</name>
        <dbReference type="ChEBI" id="CHEBI:30616"/>
    </ligand>
</feature>
<feature type="binding site" evidence="1">
    <location>
        <position position="72"/>
    </location>
    <ligand>
        <name>ATP</name>
        <dbReference type="ChEBI" id="CHEBI:30616"/>
    </ligand>
</feature>
<feature type="binding site" evidence="1">
    <location>
        <begin position="95"/>
        <end position="96"/>
    </location>
    <ligand>
        <name>ATP</name>
        <dbReference type="ChEBI" id="CHEBI:30616"/>
    </ligand>
</feature>
<feature type="binding site" evidence="1">
    <location>
        <begin position="117"/>
        <end position="122"/>
    </location>
    <ligand>
        <name>ATP</name>
        <dbReference type="ChEBI" id="CHEBI:30616"/>
    </ligand>
</feature>
<feature type="binding site" evidence="1">
    <location>
        <position position="158"/>
    </location>
    <ligand>
        <name>Zn(2+)</name>
        <dbReference type="ChEBI" id="CHEBI:29105"/>
    </ligand>
</feature>
<feature type="binding site" evidence="1">
    <location>
        <position position="161"/>
    </location>
    <ligand>
        <name>Zn(2+)</name>
        <dbReference type="ChEBI" id="CHEBI:29105"/>
    </ligand>
</feature>
<feature type="binding site" evidence="1">
    <location>
        <position position="439"/>
    </location>
    <ligand>
        <name>Zn(2+)</name>
        <dbReference type="ChEBI" id="CHEBI:29105"/>
    </ligand>
</feature>
<feature type="binding site" evidence="1">
    <location>
        <position position="442"/>
    </location>
    <ligand>
        <name>Zn(2+)</name>
        <dbReference type="ChEBI" id="CHEBI:29105"/>
    </ligand>
</feature>
<accession>Q642Q1</accession>